<gene>
    <name evidence="2" type="primary">RPS0B</name>
    <name type="synonym">NAB1B</name>
    <name type="synonym">NAB4</name>
    <name type="synonym">YST2</name>
    <name type="ORF">SCRG_05034</name>
</gene>
<feature type="initiator methionine" description="Removed" evidence="2">
    <location>
        <position position="1"/>
    </location>
</feature>
<feature type="chain" id="PRO_0000371646" description="Small ribosomal subunit protein uS2B">
    <location>
        <begin position="2"/>
        <end position="252"/>
    </location>
</feature>
<feature type="region of interest" description="Disordered" evidence="3">
    <location>
        <begin position="213"/>
        <end position="252"/>
    </location>
</feature>
<feature type="compositionally biased region" description="Acidic residues" evidence="3">
    <location>
        <begin position="213"/>
        <end position="229"/>
    </location>
</feature>
<feature type="compositionally biased region" description="Acidic residues" evidence="3">
    <location>
        <begin position="241"/>
        <end position="252"/>
    </location>
</feature>
<feature type="modified residue" description="N-acetylserine" evidence="1 2">
    <location>
        <position position="2"/>
    </location>
</feature>
<evidence type="ECO:0000250" key="1">
    <source>
        <dbReference type="UniProtKB" id="P46654"/>
    </source>
</evidence>
<evidence type="ECO:0000255" key="2">
    <source>
        <dbReference type="HAMAP-Rule" id="MF_03015"/>
    </source>
</evidence>
<evidence type="ECO:0000256" key="3">
    <source>
        <dbReference type="SAM" id="MobiDB-lite"/>
    </source>
</evidence>
<evidence type="ECO:0000305" key="4"/>
<keyword id="KW-0007">Acetylation</keyword>
<keyword id="KW-0963">Cytoplasm</keyword>
<keyword id="KW-0687">Ribonucleoprotein</keyword>
<keyword id="KW-0689">Ribosomal protein</keyword>
<sequence length="252" mass="27962">MSLPATFDLTPEDAQLLLAANTHLGARNVQVHQEPYVFNARPDGVHVINVGKTWEKLVLAARIIAAIPNPEDVVAISSRTYGQRAVLKFAAHTGATPIAGRFTPGSFTNYITRSFKEPRLVIVTDPRLDAQAIKEASYVNIPVIALTDLDSPSEFVDVAIPCNNRGKHSIGLIWYLLAREVLRLRGALVDRTQPWSIMPDLYFYRNPEEVEQVAEEAAAAEEGEEEEVKEEVTEGQAEATEWAEENADNVEW</sequence>
<name>RSSA2_YEAS1</name>
<reference key="1">
    <citation type="submission" date="2005-03" db="EMBL/GenBank/DDBJ databases">
        <title>Annotation of the Saccharomyces cerevisiae RM11-1a genome.</title>
        <authorList>
            <consortium name="The Broad Institute Genome Sequencing Platform"/>
            <person name="Birren B.W."/>
            <person name="Lander E.S."/>
            <person name="Galagan J.E."/>
            <person name="Nusbaum C."/>
            <person name="Devon K."/>
            <person name="Cuomo C."/>
            <person name="Jaffe D.B."/>
            <person name="Butler J."/>
            <person name="Alvarez P."/>
            <person name="Gnerre S."/>
            <person name="Grabherr M."/>
            <person name="Kleber M."/>
            <person name="Mauceli E.W."/>
            <person name="Brockman W."/>
            <person name="MacCallum I.A."/>
            <person name="Rounsley S."/>
            <person name="Young S.K."/>
            <person name="LaButti K."/>
            <person name="Pushparaj V."/>
            <person name="DeCaprio D."/>
            <person name="Crawford M."/>
            <person name="Koehrsen M."/>
            <person name="Engels R."/>
            <person name="Montgomery P."/>
            <person name="Pearson M."/>
            <person name="Howarth C."/>
            <person name="Larson L."/>
            <person name="Luoma S."/>
            <person name="White J."/>
            <person name="O'Leary S."/>
            <person name="Kodira C.D."/>
            <person name="Zeng Q."/>
            <person name="Yandava C."/>
            <person name="Alvarado L."/>
            <person name="Pratt S."/>
            <person name="Kruglyak L."/>
        </authorList>
    </citation>
    <scope>NUCLEOTIDE SEQUENCE [LARGE SCALE GENOMIC DNA]</scope>
    <source>
        <strain>RM11-1a</strain>
    </source>
</reference>
<accession>B3LT19</accession>
<comment type="function">
    <text evidence="2">Required for the assembly and/or stability of the 40S ribosomal subunit. Required for the processing of the 20S rRNA-precursor to mature 18S rRNA in a late step of the maturation of 40S ribosomal subunits.</text>
</comment>
<comment type="subunit">
    <text evidence="2">Component of the small ribosomal subunit. Mature ribosomes consist of a small (40S) and a large (60S) subunit. The 40S subunit contains about 33 different proteins and 1 molecule of RNA (18S). The 60S subunit contains about 49 different proteins and 3 molecules of RNA (25S, 5.8S and 5S). Interacts with RPS21.</text>
</comment>
<comment type="subcellular location">
    <subcellularLocation>
        <location evidence="2">Cytoplasm</location>
    </subcellularLocation>
</comment>
<comment type="similarity">
    <text evidence="2">Belongs to the universal ribosomal protein uS2 family.</text>
</comment>
<proteinExistence type="inferred from homology"/>
<organism>
    <name type="scientific">Saccharomyces cerevisiae (strain RM11-1a)</name>
    <name type="common">Baker's yeast</name>
    <dbReference type="NCBI Taxonomy" id="285006"/>
    <lineage>
        <taxon>Eukaryota</taxon>
        <taxon>Fungi</taxon>
        <taxon>Dikarya</taxon>
        <taxon>Ascomycota</taxon>
        <taxon>Saccharomycotina</taxon>
        <taxon>Saccharomycetes</taxon>
        <taxon>Saccharomycetales</taxon>
        <taxon>Saccharomycetaceae</taxon>
        <taxon>Saccharomyces</taxon>
    </lineage>
</organism>
<protein>
    <recommendedName>
        <fullName evidence="2">Small ribosomal subunit protein uS2B</fullName>
    </recommendedName>
    <alternativeName>
        <fullName evidence="4">40S ribosomal protein S0-B</fullName>
    </alternativeName>
    <alternativeName>
        <fullName>Nucleic acid-binding protein NAB1B</fullName>
    </alternativeName>
</protein>
<dbReference type="EMBL" id="CH408054">
    <property type="protein sequence ID" value="EDV09354.1"/>
    <property type="molecule type" value="Genomic_DNA"/>
</dbReference>
<dbReference type="SMR" id="B3LT19"/>
<dbReference type="IntAct" id="B3LT19">
    <property type="interactions" value="2"/>
</dbReference>
<dbReference type="MINT" id="B3LT19"/>
<dbReference type="HOGENOM" id="CLU_058171_2_0_1"/>
<dbReference type="OrthoDB" id="3300at4893"/>
<dbReference type="Proteomes" id="UP000008335">
    <property type="component" value="Unassembled WGS sequence"/>
</dbReference>
<dbReference type="GO" id="GO:0022627">
    <property type="term" value="C:cytosolic small ribosomal subunit"/>
    <property type="evidence" value="ECO:0007669"/>
    <property type="project" value="UniProtKB-UniRule"/>
</dbReference>
<dbReference type="GO" id="GO:0003735">
    <property type="term" value="F:structural constituent of ribosome"/>
    <property type="evidence" value="ECO:0007669"/>
    <property type="project" value="UniProtKB-UniRule"/>
</dbReference>
<dbReference type="GO" id="GO:0000028">
    <property type="term" value="P:ribosomal small subunit assembly"/>
    <property type="evidence" value="ECO:0007669"/>
    <property type="project" value="UniProtKB-UniRule"/>
</dbReference>
<dbReference type="GO" id="GO:0006412">
    <property type="term" value="P:translation"/>
    <property type="evidence" value="ECO:0007669"/>
    <property type="project" value="UniProtKB-UniRule"/>
</dbReference>
<dbReference type="CDD" id="cd01425">
    <property type="entry name" value="RPS2"/>
    <property type="match status" value="1"/>
</dbReference>
<dbReference type="FunFam" id="3.40.50.10490:FF:000010">
    <property type="entry name" value="40S ribosomal protein S0"/>
    <property type="match status" value="1"/>
</dbReference>
<dbReference type="Gene3D" id="3.40.50.10490">
    <property type="entry name" value="Glucose-6-phosphate isomerase like protein, domain 1"/>
    <property type="match status" value="1"/>
</dbReference>
<dbReference type="HAMAP" id="MF_03015">
    <property type="entry name" value="Ribosomal_S2_euk"/>
    <property type="match status" value="1"/>
</dbReference>
<dbReference type="InterPro" id="IPR001865">
    <property type="entry name" value="Ribosomal_uS2"/>
</dbReference>
<dbReference type="InterPro" id="IPR018130">
    <property type="entry name" value="Ribosomal_uS2_CS"/>
</dbReference>
<dbReference type="InterPro" id="IPR027498">
    <property type="entry name" value="Ribosomal_uS2_euk"/>
</dbReference>
<dbReference type="InterPro" id="IPR005707">
    <property type="entry name" value="Ribosomal_uS2_euk/arc"/>
</dbReference>
<dbReference type="InterPro" id="IPR023591">
    <property type="entry name" value="Ribosomal_uS2_flav_dom_sf"/>
</dbReference>
<dbReference type="NCBIfam" id="TIGR01012">
    <property type="entry name" value="uS2_euk_arch"/>
    <property type="match status" value="1"/>
</dbReference>
<dbReference type="PANTHER" id="PTHR11489">
    <property type="entry name" value="40S RIBOSOMAL PROTEIN SA"/>
    <property type="match status" value="1"/>
</dbReference>
<dbReference type="Pfam" id="PF00318">
    <property type="entry name" value="Ribosomal_S2"/>
    <property type="match status" value="2"/>
</dbReference>
<dbReference type="PRINTS" id="PR00395">
    <property type="entry name" value="RIBOSOMALS2"/>
</dbReference>
<dbReference type="SUPFAM" id="SSF52313">
    <property type="entry name" value="Ribosomal protein S2"/>
    <property type="match status" value="1"/>
</dbReference>
<dbReference type="PROSITE" id="PS00962">
    <property type="entry name" value="RIBOSOMAL_S2_1"/>
    <property type="match status" value="1"/>
</dbReference>
<dbReference type="PROSITE" id="PS00963">
    <property type="entry name" value="RIBOSOMAL_S2_2"/>
    <property type="match status" value="1"/>
</dbReference>